<gene>
    <name type="primary">yezF</name>
    <name type="ordered locus">BSU06559</name>
</gene>
<protein>
    <recommendedName>
        <fullName>Uncharacterized membrane protein YezF</fullName>
    </recommendedName>
</protein>
<sequence length="75" mass="8389">MKPNISLINAVFRIACGLTIMSAASAKFTKKPWCRMHLFYIFMGAMKAGSGILRFCPVTYMFQHSDSGNNEHQNG</sequence>
<proteinExistence type="predicted"/>
<reference key="1">
    <citation type="journal article" date="1997" name="Nature">
        <title>The complete genome sequence of the Gram-positive bacterium Bacillus subtilis.</title>
        <authorList>
            <person name="Kunst F."/>
            <person name="Ogasawara N."/>
            <person name="Moszer I."/>
            <person name="Albertini A.M."/>
            <person name="Alloni G."/>
            <person name="Azevedo V."/>
            <person name="Bertero M.G."/>
            <person name="Bessieres P."/>
            <person name="Bolotin A."/>
            <person name="Borchert S."/>
            <person name="Borriss R."/>
            <person name="Boursier L."/>
            <person name="Brans A."/>
            <person name="Braun M."/>
            <person name="Brignell S.C."/>
            <person name="Bron S."/>
            <person name="Brouillet S."/>
            <person name="Bruschi C.V."/>
            <person name="Caldwell B."/>
            <person name="Capuano V."/>
            <person name="Carter N.M."/>
            <person name="Choi S.-K."/>
            <person name="Codani J.-J."/>
            <person name="Connerton I.F."/>
            <person name="Cummings N.J."/>
            <person name="Daniel R.A."/>
            <person name="Denizot F."/>
            <person name="Devine K.M."/>
            <person name="Duesterhoeft A."/>
            <person name="Ehrlich S.D."/>
            <person name="Emmerson P.T."/>
            <person name="Entian K.-D."/>
            <person name="Errington J."/>
            <person name="Fabret C."/>
            <person name="Ferrari E."/>
            <person name="Foulger D."/>
            <person name="Fritz C."/>
            <person name="Fujita M."/>
            <person name="Fujita Y."/>
            <person name="Fuma S."/>
            <person name="Galizzi A."/>
            <person name="Galleron N."/>
            <person name="Ghim S.-Y."/>
            <person name="Glaser P."/>
            <person name="Goffeau A."/>
            <person name="Golightly E.J."/>
            <person name="Grandi G."/>
            <person name="Guiseppi G."/>
            <person name="Guy B.J."/>
            <person name="Haga K."/>
            <person name="Haiech J."/>
            <person name="Harwood C.R."/>
            <person name="Henaut A."/>
            <person name="Hilbert H."/>
            <person name="Holsappel S."/>
            <person name="Hosono S."/>
            <person name="Hullo M.-F."/>
            <person name="Itaya M."/>
            <person name="Jones L.-M."/>
            <person name="Joris B."/>
            <person name="Karamata D."/>
            <person name="Kasahara Y."/>
            <person name="Klaerr-Blanchard M."/>
            <person name="Klein C."/>
            <person name="Kobayashi Y."/>
            <person name="Koetter P."/>
            <person name="Koningstein G."/>
            <person name="Krogh S."/>
            <person name="Kumano M."/>
            <person name="Kurita K."/>
            <person name="Lapidus A."/>
            <person name="Lardinois S."/>
            <person name="Lauber J."/>
            <person name="Lazarevic V."/>
            <person name="Lee S.-M."/>
            <person name="Levine A."/>
            <person name="Liu H."/>
            <person name="Masuda S."/>
            <person name="Mauel C."/>
            <person name="Medigue C."/>
            <person name="Medina N."/>
            <person name="Mellado R.P."/>
            <person name="Mizuno M."/>
            <person name="Moestl D."/>
            <person name="Nakai S."/>
            <person name="Noback M."/>
            <person name="Noone D."/>
            <person name="O'Reilly M."/>
            <person name="Ogawa K."/>
            <person name="Ogiwara A."/>
            <person name="Oudega B."/>
            <person name="Park S.-H."/>
            <person name="Parro V."/>
            <person name="Pohl T.M."/>
            <person name="Portetelle D."/>
            <person name="Porwollik S."/>
            <person name="Prescott A.M."/>
            <person name="Presecan E."/>
            <person name="Pujic P."/>
            <person name="Purnelle B."/>
            <person name="Rapoport G."/>
            <person name="Rey M."/>
            <person name="Reynolds S."/>
            <person name="Rieger M."/>
            <person name="Rivolta C."/>
            <person name="Rocha E."/>
            <person name="Roche B."/>
            <person name="Rose M."/>
            <person name="Sadaie Y."/>
            <person name="Sato T."/>
            <person name="Scanlan E."/>
            <person name="Schleich S."/>
            <person name="Schroeter R."/>
            <person name="Scoffone F."/>
            <person name="Sekiguchi J."/>
            <person name="Sekowska A."/>
            <person name="Seror S.J."/>
            <person name="Serror P."/>
            <person name="Shin B.-S."/>
            <person name="Soldo B."/>
            <person name="Sorokin A."/>
            <person name="Tacconi E."/>
            <person name="Takagi T."/>
            <person name="Takahashi H."/>
            <person name="Takemaru K."/>
            <person name="Takeuchi M."/>
            <person name="Tamakoshi A."/>
            <person name="Tanaka T."/>
            <person name="Terpstra P."/>
            <person name="Tognoni A."/>
            <person name="Tosato V."/>
            <person name="Uchiyama S."/>
            <person name="Vandenbol M."/>
            <person name="Vannier F."/>
            <person name="Vassarotti A."/>
            <person name="Viari A."/>
            <person name="Wambutt R."/>
            <person name="Wedler E."/>
            <person name="Wedler H."/>
            <person name="Weitzenegger T."/>
            <person name="Winters P."/>
            <person name="Wipat A."/>
            <person name="Yamamoto H."/>
            <person name="Yamane K."/>
            <person name="Yasumoto K."/>
            <person name="Yata K."/>
            <person name="Yoshida K."/>
            <person name="Yoshikawa H.-F."/>
            <person name="Zumstein E."/>
            <person name="Yoshikawa H."/>
            <person name="Danchin A."/>
        </authorList>
    </citation>
    <scope>NUCLEOTIDE SEQUENCE [LARGE SCALE GENOMIC DNA]</scope>
    <source>
        <strain>168</strain>
    </source>
</reference>
<dbReference type="EMBL" id="AL009126">
    <property type="protein sequence ID" value="CAX52578.1"/>
    <property type="molecule type" value="Genomic_DNA"/>
</dbReference>
<dbReference type="RefSeq" id="WP_003233931.1">
    <property type="nucleotide sequence ID" value="NZ_OZ025638.1"/>
</dbReference>
<dbReference type="RefSeq" id="YP_003097691.1">
    <property type="nucleotide sequence ID" value="NC_000964.3"/>
</dbReference>
<dbReference type="FunCoup" id="C0H3X3">
    <property type="interactions" value="3"/>
</dbReference>
<dbReference type="STRING" id="224308.BSU06559"/>
<dbReference type="PaxDb" id="224308-BSU06559"/>
<dbReference type="EnsemblBacteria" id="CAX52578">
    <property type="protein sequence ID" value="CAX52578"/>
    <property type="gene ID" value="BSU_06559"/>
</dbReference>
<dbReference type="GeneID" id="8302929"/>
<dbReference type="KEGG" id="bsu:BSU06559"/>
<dbReference type="PATRIC" id="fig|224308.179.peg.712"/>
<dbReference type="InParanoid" id="C0H3X3"/>
<dbReference type="OrthoDB" id="5405951at2"/>
<dbReference type="BioCyc" id="BSUB:BSU06559-MONOMER"/>
<dbReference type="Proteomes" id="UP000001570">
    <property type="component" value="Chromosome"/>
</dbReference>
<dbReference type="GO" id="GO:0005886">
    <property type="term" value="C:plasma membrane"/>
    <property type="evidence" value="ECO:0007669"/>
    <property type="project" value="UniProtKB-SubCell"/>
</dbReference>
<dbReference type="InterPro" id="IPR021309">
    <property type="entry name" value="YgaP-like_TM"/>
</dbReference>
<dbReference type="Pfam" id="PF11127">
    <property type="entry name" value="YgaP-like_TM"/>
    <property type="match status" value="1"/>
</dbReference>
<name>YEZF_BACSU</name>
<accession>C0H3X3</accession>
<organism>
    <name type="scientific">Bacillus subtilis (strain 168)</name>
    <dbReference type="NCBI Taxonomy" id="224308"/>
    <lineage>
        <taxon>Bacteria</taxon>
        <taxon>Bacillati</taxon>
        <taxon>Bacillota</taxon>
        <taxon>Bacilli</taxon>
        <taxon>Bacillales</taxon>
        <taxon>Bacillaceae</taxon>
        <taxon>Bacillus</taxon>
    </lineage>
</organism>
<evidence type="ECO:0000255" key="1"/>
<evidence type="ECO:0000305" key="2"/>
<feature type="chain" id="PRO_0000382662" description="Uncharacterized membrane protein YezF">
    <location>
        <begin position="1"/>
        <end position="75"/>
    </location>
</feature>
<feature type="transmembrane region" description="Helical" evidence="1">
    <location>
        <begin position="7"/>
        <end position="26"/>
    </location>
</feature>
<feature type="transmembrane region" description="Helical" evidence="1">
    <location>
        <begin position="36"/>
        <end position="58"/>
    </location>
</feature>
<comment type="subcellular location">
    <subcellularLocation>
        <location evidence="2">Cell membrane</location>
        <topology evidence="2">Multi-pass membrane protein</topology>
    </subcellularLocation>
</comment>
<keyword id="KW-1003">Cell membrane</keyword>
<keyword id="KW-0472">Membrane</keyword>
<keyword id="KW-1185">Reference proteome</keyword>
<keyword id="KW-0812">Transmembrane</keyword>
<keyword id="KW-1133">Transmembrane helix</keyword>